<comment type="function">
    <text evidence="1">Specifically dimethylates two adjacent adenosines (A1518 and A1519) in the loop of a conserved hairpin near the 3'-end of 16S rRNA in the 30S particle. May play a critical role in biogenesis of 30S subunits.</text>
</comment>
<comment type="catalytic activity">
    <reaction evidence="1">
        <text>adenosine(1518)/adenosine(1519) in 16S rRNA + 4 S-adenosyl-L-methionine = N(6)-dimethyladenosine(1518)/N(6)-dimethyladenosine(1519) in 16S rRNA + 4 S-adenosyl-L-homocysteine + 4 H(+)</text>
        <dbReference type="Rhea" id="RHEA:19609"/>
        <dbReference type="Rhea" id="RHEA-COMP:10232"/>
        <dbReference type="Rhea" id="RHEA-COMP:10233"/>
        <dbReference type="ChEBI" id="CHEBI:15378"/>
        <dbReference type="ChEBI" id="CHEBI:57856"/>
        <dbReference type="ChEBI" id="CHEBI:59789"/>
        <dbReference type="ChEBI" id="CHEBI:74411"/>
        <dbReference type="ChEBI" id="CHEBI:74493"/>
        <dbReference type="EC" id="2.1.1.182"/>
    </reaction>
</comment>
<comment type="subcellular location">
    <subcellularLocation>
        <location evidence="1">Cytoplasm</location>
    </subcellularLocation>
</comment>
<comment type="similarity">
    <text evidence="1">Belongs to the class I-like SAM-binding methyltransferase superfamily. rRNA adenine N(6)-methyltransferase family. RsmA subfamily.</text>
</comment>
<evidence type="ECO:0000255" key="1">
    <source>
        <dbReference type="HAMAP-Rule" id="MF_00607"/>
    </source>
</evidence>
<gene>
    <name evidence="1" type="primary">rsmA</name>
    <name evidence="1" type="synonym">ksgA</name>
    <name type="ordered locus">Mvan_4800</name>
</gene>
<accession>A1TEH3</accession>
<proteinExistence type="inferred from homology"/>
<dbReference type="EC" id="2.1.1.182" evidence="1"/>
<dbReference type="EMBL" id="CP000511">
    <property type="protein sequence ID" value="ABM15573.1"/>
    <property type="molecule type" value="Genomic_DNA"/>
</dbReference>
<dbReference type="RefSeq" id="WP_011781947.1">
    <property type="nucleotide sequence ID" value="NZ_JACKSD010000356.1"/>
</dbReference>
<dbReference type="SMR" id="A1TEH3"/>
<dbReference type="STRING" id="350058.Mvan_4800"/>
<dbReference type="KEGG" id="mva:Mvan_4800"/>
<dbReference type="eggNOG" id="COG0030">
    <property type="taxonomic scope" value="Bacteria"/>
</dbReference>
<dbReference type="HOGENOM" id="CLU_041220_1_1_11"/>
<dbReference type="Proteomes" id="UP000009159">
    <property type="component" value="Chromosome"/>
</dbReference>
<dbReference type="GO" id="GO:0005829">
    <property type="term" value="C:cytosol"/>
    <property type="evidence" value="ECO:0007669"/>
    <property type="project" value="TreeGrafter"/>
</dbReference>
<dbReference type="GO" id="GO:0052908">
    <property type="term" value="F:16S rRNA (adenine(1518)-N(6)/adenine(1519)-N(6))-dimethyltransferase activity"/>
    <property type="evidence" value="ECO:0007669"/>
    <property type="project" value="UniProtKB-EC"/>
</dbReference>
<dbReference type="GO" id="GO:0003723">
    <property type="term" value="F:RNA binding"/>
    <property type="evidence" value="ECO:0007669"/>
    <property type="project" value="UniProtKB-KW"/>
</dbReference>
<dbReference type="CDD" id="cd02440">
    <property type="entry name" value="AdoMet_MTases"/>
    <property type="match status" value="1"/>
</dbReference>
<dbReference type="FunFam" id="1.10.8.100:FF:000003">
    <property type="entry name" value="Ribosomal RNA small subunit methyltransferase A"/>
    <property type="match status" value="1"/>
</dbReference>
<dbReference type="FunFam" id="3.40.50.150:FF:000023">
    <property type="entry name" value="Ribosomal RNA small subunit methyltransferase A"/>
    <property type="match status" value="1"/>
</dbReference>
<dbReference type="Gene3D" id="1.10.8.100">
    <property type="entry name" value="Ribosomal RNA adenine dimethylase-like, domain 2"/>
    <property type="match status" value="1"/>
</dbReference>
<dbReference type="Gene3D" id="3.40.50.150">
    <property type="entry name" value="Vaccinia Virus protein VP39"/>
    <property type="match status" value="1"/>
</dbReference>
<dbReference type="HAMAP" id="MF_00607">
    <property type="entry name" value="16SrRNA_methyltr_A"/>
    <property type="match status" value="1"/>
</dbReference>
<dbReference type="InterPro" id="IPR001737">
    <property type="entry name" value="KsgA/Erm"/>
</dbReference>
<dbReference type="InterPro" id="IPR023165">
    <property type="entry name" value="rRNA_Ade_diMease-like_C"/>
</dbReference>
<dbReference type="InterPro" id="IPR020596">
    <property type="entry name" value="rRNA_Ade_Mease_Trfase_CS"/>
</dbReference>
<dbReference type="InterPro" id="IPR020598">
    <property type="entry name" value="rRNA_Ade_methylase_Trfase_N"/>
</dbReference>
<dbReference type="InterPro" id="IPR011530">
    <property type="entry name" value="rRNA_adenine_dimethylase"/>
</dbReference>
<dbReference type="InterPro" id="IPR029063">
    <property type="entry name" value="SAM-dependent_MTases_sf"/>
</dbReference>
<dbReference type="NCBIfam" id="TIGR00755">
    <property type="entry name" value="ksgA"/>
    <property type="match status" value="1"/>
</dbReference>
<dbReference type="PANTHER" id="PTHR11727">
    <property type="entry name" value="DIMETHYLADENOSINE TRANSFERASE"/>
    <property type="match status" value="1"/>
</dbReference>
<dbReference type="PANTHER" id="PTHR11727:SF7">
    <property type="entry name" value="DIMETHYLADENOSINE TRANSFERASE-RELATED"/>
    <property type="match status" value="1"/>
</dbReference>
<dbReference type="Pfam" id="PF00398">
    <property type="entry name" value="RrnaAD"/>
    <property type="match status" value="1"/>
</dbReference>
<dbReference type="SMART" id="SM00650">
    <property type="entry name" value="rADc"/>
    <property type="match status" value="1"/>
</dbReference>
<dbReference type="SUPFAM" id="SSF53335">
    <property type="entry name" value="S-adenosyl-L-methionine-dependent methyltransferases"/>
    <property type="match status" value="1"/>
</dbReference>
<dbReference type="PROSITE" id="PS01131">
    <property type="entry name" value="RRNA_A_DIMETH"/>
    <property type="match status" value="1"/>
</dbReference>
<dbReference type="PROSITE" id="PS51689">
    <property type="entry name" value="SAM_RNA_A_N6_MT"/>
    <property type="match status" value="1"/>
</dbReference>
<feature type="chain" id="PRO_1000130299" description="Ribosomal RNA small subunit methyltransferase A">
    <location>
        <begin position="1"/>
        <end position="311"/>
    </location>
</feature>
<feature type="binding site" evidence="1">
    <location>
        <position position="29"/>
    </location>
    <ligand>
        <name>S-adenosyl-L-methionine</name>
        <dbReference type="ChEBI" id="CHEBI:59789"/>
    </ligand>
</feature>
<feature type="binding site" evidence="1">
    <location>
        <position position="31"/>
    </location>
    <ligand>
        <name>S-adenosyl-L-methionine</name>
        <dbReference type="ChEBI" id="CHEBI:59789"/>
    </ligand>
</feature>
<feature type="binding site" evidence="1">
    <location>
        <position position="56"/>
    </location>
    <ligand>
        <name>S-adenosyl-L-methionine</name>
        <dbReference type="ChEBI" id="CHEBI:59789"/>
    </ligand>
</feature>
<feature type="binding site" evidence="1">
    <location>
        <position position="77"/>
    </location>
    <ligand>
        <name>S-adenosyl-L-methionine</name>
        <dbReference type="ChEBI" id="CHEBI:59789"/>
    </ligand>
</feature>
<feature type="binding site" evidence="1">
    <location>
        <position position="107"/>
    </location>
    <ligand>
        <name>S-adenosyl-L-methionine</name>
        <dbReference type="ChEBI" id="CHEBI:59789"/>
    </ligand>
</feature>
<feature type="binding site" evidence="1">
    <location>
        <position position="126"/>
    </location>
    <ligand>
        <name>S-adenosyl-L-methionine</name>
        <dbReference type="ChEBI" id="CHEBI:59789"/>
    </ligand>
</feature>
<protein>
    <recommendedName>
        <fullName evidence="1">Ribosomal RNA small subunit methyltransferase A</fullName>
        <ecNumber evidence="1">2.1.1.182</ecNumber>
    </recommendedName>
    <alternativeName>
        <fullName evidence="1">16S rRNA (adenine(1518)-N(6)/adenine(1519)-N(6))-dimethyltransferase</fullName>
    </alternativeName>
    <alternativeName>
        <fullName evidence="1">16S rRNA dimethyladenosine transferase</fullName>
    </alternativeName>
    <alternativeName>
        <fullName evidence="1">16S rRNA dimethylase</fullName>
    </alternativeName>
    <alternativeName>
        <fullName evidence="1">S-adenosylmethionine-6-N', N'-adenosyl(rRNA) dimethyltransferase</fullName>
    </alternativeName>
</protein>
<organism>
    <name type="scientific">Mycolicibacterium vanbaalenii (strain DSM 7251 / JCM 13017 / BCRC 16820 / KCTC 9966 / NRRL B-24157 / PYR-1)</name>
    <name type="common">Mycobacterium vanbaalenii</name>
    <dbReference type="NCBI Taxonomy" id="350058"/>
    <lineage>
        <taxon>Bacteria</taxon>
        <taxon>Bacillati</taxon>
        <taxon>Actinomycetota</taxon>
        <taxon>Actinomycetes</taxon>
        <taxon>Mycobacteriales</taxon>
        <taxon>Mycobacteriaceae</taxon>
        <taxon>Mycolicibacterium</taxon>
    </lineage>
</organism>
<name>RSMA_MYCVP</name>
<sequence length="311" mass="34391">MTIRLLGRTEIRHLAKSIDFRPRKSFGQNFVHDANTVRRIVSASSINRSDHVLEVGPGLGSLTLALLDRGAKVTAVEIDPVLANQLPTTIAAHSHSEVNRLTVLNRDILTFKQSDMTEMPTALVANLPYNVAVPALLHLLAEFPSIRTVMVMVQAEVAERLAAEPGGKDYGVPSAKVRFFGNVRRYGMVSPTVFWPIPRVYSGLVRIDRYETSPWPTDPEFRQQVFELIDVAFAQRRKTSRNAFAEWAGSGNESASRLLAASIDPSRRGETLSINDFVRLLQRSADWHVVPKPESAATAVATDEDAQVPTL</sequence>
<keyword id="KW-0963">Cytoplasm</keyword>
<keyword id="KW-0489">Methyltransferase</keyword>
<keyword id="KW-0694">RNA-binding</keyword>
<keyword id="KW-0698">rRNA processing</keyword>
<keyword id="KW-0949">S-adenosyl-L-methionine</keyword>
<keyword id="KW-0808">Transferase</keyword>
<reference key="1">
    <citation type="submission" date="2006-12" db="EMBL/GenBank/DDBJ databases">
        <title>Complete sequence of Mycobacterium vanbaalenii PYR-1.</title>
        <authorList>
            <consortium name="US DOE Joint Genome Institute"/>
            <person name="Copeland A."/>
            <person name="Lucas S."/>
            <person name="Lapidus A."/>
            <person name="Barry K."/>
            <person name="Detter J.C."/>
            <person name="Glavina del Rio T."/>
            <person name="Hammon N."/>
            <person name="Israni S."/>
            <person name="Dalin E."/>
            <person name="Tice H."/>
            <person name="Pitluck S."/>
            <person name="Singan V."/>
            <person name="Schmutz J."/>
            <person name="Larimer F."/>
            <person name="Land M."/>
            <person name="Hauser L."/>
            <person name="Kyrpides N."/>
            <person name="Anderson I.J."/>
            <person name="Miller C."/>
            <person name="Richardson P."/>
        </authorList>
    </citation>
    <scope>NUCLEOTIDE SEQUENCE [LARGE SCALE GENOMIC DNA]</scope>
    <source>
        <strain>DSM 7251 / JCM 13017 / BCRC 16820 / KCTC 9966 / NRRL B-24157 / PYR-1</strain>
    </source>
</reference>